<comment type="subunit">
    <text evidence="2">Component of the 40S small ribosomal subunit.</text>
</comment>
<comment type="subcellular location">
    <subcellularLocation>
        <location evidence="1">Cytoplasm</location>
        <location evidence="1">Cytosol</location>
    </subcellularLocation>
    <subcellularLocation>
        <location evidence="1">Cytoplasm</location>
    </subcellularLocation>
    <subcellularLocation>
        <location evidence="2">Rough endoplasmic reticulum</location>
    </subcellularLocation>
    <text evidence="1 2">Detected on cytosolic polysomes (By similarity). Detected in ribosomes that are associated with the rough endoplasmic reticulum (By similarity).</text>
</comment>
<comment type="similarity">
    <text evidence="3">Belongs to the eukaryotic ribosomal protein eS28 family.</text>
</comment>
<accession>Q6EV21</accession>
<sequence length="65" mass="7318">MDKPNVLARVVKVLGRTGSQGQCTQVKVEFIGETSRQIIRNVKGPVRDGDILTLLESEREARRLR</sequence>
<protein>
    <recommendedName>
        <fullName evidence="3">Small ribosomal subunit protein eS28</fullName>
    </recommendedName>
    <alternativeName>
        <fullName>40S ribosomal protein S28</fullName>
    </alternativeName>
</protein>
<feature type="chain" id="PRO_0000136832" description="Small ribosomal subunit protein eS28">
    <location>
        <begin position="1"/>
        <end position="65"/>
    </location>
</feature>
<reference key="1">
    <citation type="submission" date="2004-07" db="EMBL/GenBank/DDBJ databases">
        <title>Phylogenomics of the translational machinery: ribosomal proteins from ESTs support the Coelomata hypothesis.</title>
        <authorList>
            <person name="Longhorn S.J."/>
            <person name="Foster P."/>
            <person name="Vogler A.P."/>
        </authorList>
    </citation>
    <scope>NUCLEOTIDE SEQUENCE [MRNA]</scope>
</reference>
<name>RS28_PAPDA</name>
<keyword id="KW-0963">Cytoplasm</keyword>
<keyword id="KW-0256">Endoplasmic reticulum</keyword>
<keyword id="KW-0687">Ribonucleoprotein</keyword>
<keyword id="KW-0689">Ribosomal protein</keyword>
<dbReference type="EMBL" id="AJ783766">
    <property type="protein sequence ID" value="CAH04129.1"/>
    <property type="molecule type" value="mRNA"/>
</dbReference>
<dbReference type="SMR" id="Q6EV21"/>
<dbReference type="GO" id="GO:0098556">
    <property type="term" value="C:cytoplasmic side of rough endoplasmic reticulum membrane"/>
    <property type="evidence" value="ECO:0000250"/>
    <property type="project" value="UniProtKB"/>
</dbReference>
<dbReference type="GO" id="GO:0022627">
    <property type="term" value="C:cytosolic small ribosomal subunit"/>
    <property type="evidence" value="ECO:0000250"/>
    <property type="project" value="UniProtKB"/>
</dbReference>
<dbReference type="GO" id="GO:0005840">
    <property type="term" value="C:ribosome"/>
    <property type="evidence" value="ECO:0000250"/>
    <property type="project" value="UniProtKB"/>
</dbReference>
<dbReference type="GO" id="GO:0003735">
    <property type="term" value="F:structural constituent of ribosome"/>
    <property type="evidence" value="ECO:0007669"/>
    <property type="project" value="InterPro"/>
</dbReference>
<dbReference type="GO" id="GO:0002181">
    <property type="term" value="P:cytoplasmic translation"/>
    <property type="evidence" value="ECO:0000250"/>
    <property type="project" value="UniProtKB"/>
</dbReference>
<dbReference type="GO" id="GO:0030490">
    <property type="term" value="P:maturation of SSU-rRNA"/>
    <property type="evidence" value="ECO:0007669"/>
    <property type="project" value="TreeGrafter"/>
</dbReference>
<dbReference type="GO" id="GO:0000028">
    <property type="term" value="P:ribosomal small subunit assembly"/>
    <property type="evidence" value="ECO:0007669"/>
    <property type="project" value="TreeGrafter"/>
</dbReference>
<dbReference type="CDD" id="cd04457">
    <property type="entry name" value="S1_S28E"/>
    <property type="match status" value="1"/>
</dbReference>
<dbReference type="FunFam" id="2.40.50.140:FF:000025">
    <property type="entry name" value="40S ribosomal protein S28"/>
    <property type="match status" value="1"/>
</dbReference>
<dbReference type="Gene3D" id="2.40.50.140">
    <property type="entry name" value="Nucleic acid-binding proteins"/>
    <property type="match status" value="1"/>
</dbReference>
<dbReference type="HAMAP" id="MF_00292">
    <property type="entry name" value="Ribosomal_eS28"/>
    <property type="match status" value="1"/>
</dbReference>
<dbReference type="InterPro" id="IPR012340">
    <property type="entry name" value="NA-bd_OB-fold"/>
</dbReference>
<dbReference type="InterPro" id="IPR000289">
    <property type="entry name" value="Ribosomal_eS28"/>
</dbReference>
<dbReference type="InterPro" id="IPR028626">
    <property type="entry name" value="Ribosomal_eS28_CS"/>
</dbReference>
<dbReference type="PANTHER" id="PTHR10769">
    <property type="entry name" value="40S RIBOSOMAL PROTEIN S28"/>
    <property type="match status" value="1"/>
</dbReference>
<dbReference type="PANTHER" id="PTHR10769:SF3">
    <property type="entry name" value="SMALL RIBOSOMAL SUBUNIT PROTEIN ES28"/>
    <property type="match status" value="1"/>
</dbReference>
<dbReference type="Pfam" id="PF01200">
    <property type="entry name" value="Ribosomal_S28e"/>
    <property type="match status" value="1"/>
</dbReference>
<dbReference type="SUPFAM" id="SSF50249">
    <property type="entry name" value="Nucleic acid-binding proteins"/>
    <property type="match status" value="1"/>
</dbReference>
<dbReference type="PROSITE" id="PS00961">
    <property type="entry name" value="RIBOSOMAL_S28E"/>
    <property type="match status" value="1"/>
</dbReference>
<proteinExistence type="inferred from homology"/>
<evidence type="ECO:0000250" key="1">
    <source>
        <dbReference type="UniProtKB" id="P62857"/>
    </source>
</evidence>
<evidence type="ECO:0000250" key="2">
    <source>
        <dbReference type="UniProtKB" id="Q6QAT1"/>
    </source>
</evidence>
<evidence type="ECO:0000305" key="3"/>
<organism>
    <name type="scientific">Papilio dardanus</name>
    <name type="common">African swallowtail butterfly</name>
    <dbReference type="NCBI Taxonomy" id="77259"/>
    <lineage>
        <taxon>Eukaryota</taxon>
        <taxon>Metazoa</taxon>
        <taxon>Ecdysozoa</taxon>
        <taxon>Arthropoda</taxon>
        <taxon>Hexapoda</taxon>
        <taxon>Insecta</taxon>
        <taxon>Pterygota</taxon>
        <taxon>Neoptera</taxon>
        <taxon>Endopterygota</taxon>
        <taxon>Lepidoptera</taxon>
        <taxon>Glossata</taxon>
        <taxon>Ditrysia</taxon>
        <taxon>Papilionoidea</taxon>
        <taxon>Papilionidae</taxon>
        <taxon>Papilioninae</taxon>
        <taxon>Papilio</taxon>
    </lineage>
</organism>
<gene>
    <name type="primary">RpS28</name>
</gene>